<evidence type="ECO:0000255" key="1">
    <source>
        <dbReference type="HAMAP-Rule" id="MF_00902"/>
    </source>
</evidence>
<reference key="1">
    <citation type="journal article" date="2009" name="Appl. Environ. Microbiol.">
        <title>Three genomes from the phylum Acidobacteria provide insight into the lifestyles of these microorganisms in soils.</title>
        <authorList>
            <person name="Ward N.L."/>
            <person name="Challacombe J.F."/>
            <person name="Janssen P.H."/>
            <person name="Henrissat B."/>
            <person name="Coutinho P.M."/>
            <person name="Wu M."/>
            <person name="Xie G."/>
            <person name="Haft D.H."/>
            <person name="Sait M."/>
            <person name="Badger J."/>
            <person name="Barabote R.D."/>
            <person name="Bradley B."/>
            <person name="Brettin T.S."/>
            <person name="Brinkac L.M."/>
            <person name="Bruce D."/>
            <person name="Creasy T."/>
            <person name="Daugherty S.C."/>
            <person name="Davidsen T.M."/>
            <person name="DeBoy R.T."/>
            <person name="Detter J.C."/>
            <person name="Dodson R.J."/>
            <person name="Durkin A.S."/>
            <person name="Ganapathy A."/>
            <person name="Gwinn-Giglio M."/>
            <person name="Han C.S."/>
            <person name="Khouri H."/>
            <person name="Kiss H."/>
            <person name="Kothari S.P."/>
            <person name="Madupu R."/>
            <person name="Nelson K.E."/>
            <person name="Nelson W.C."/>
            <person name="Paulsen I."/>
            <person name="Penn K."/>
            <person name="Ren Q."/>
            <person name="Rosovitz M.J."/>
            <person name="Selengut J.D."/>
            <person name="Shrivastava S."/>
            <person name="Sullivan S.A."/>
            <person name="Tapia R."/>
            <person name="Thompson L.S."/>
            <person name="Watkins K.L."/>
            <person name="Yang Q."/>
            <person name="Yu C."/>
            <person name="Zafar N."/>
            <person name="Zhou L."/>
            <person name="Kuske C.R."/>
        </authorList>
    </citation>
    <scope>NUCLEOTIDE SEQUENCE [LARGE SCALE GENOMIC DNA]</scope>
    <source>
        <strain>Ellin345</strain>
    </source>
</reference>
<protein>
    <recommendedName>
        <fullName evidence="1">Sec-independent protein translocase protein TatC</fullName>
    </recommendedName>
</protein>
<keyword id="KW-0997">Cell inner membrane</keyword>
<keyword id="KW-1003">Cell membrane</keyword>
<keyword id="KW-0472">Membrane</keyword>
<keyword id="KW-0653">Protein transport</keyword>
<keyword id="KW-1185">Reference proteome</keyword>
<keyword id="KW-0811">Translocation</keyword>
<keyword id="KW-0812">Transmembrane</keyword>
<keyword id="KW-1133">Transmembrane helix</keyword>
<keyword id="KW-0813">Transport</keyword>
<feature type="chain" id="PRO_0000412857" description="Sec-independent protein translocase protein TatC">
    <location>
        <begin position="1"/>
        <end position="271"/>
    </location>
</feature>
<feature type="transmembrane region" description="Helical" evidence="1">
    <location>
        <begin position="35"/>
        <end position="55"/>
    </location>
</feature>
<feature type="transmembrane region" description="Helical" evidence="1">
    <location>
        <begin position="93"/>
        <end position="113"/>
    </location>
</feature>
<feature type="transmembrane region" description="Helical" evidence="1">
    <location>
        <begin position="124"/>
        <end position="144"/>
    </location>
</feature>
<feature type="transmembrane region" description="Helical" evidence="1">
    <location>
        <begin position="178"/>
        <end position="198"/>
    </location>
</feature>
<feature type="transmembrane region" description="Helical" evidence="1">
    <location>
        <begin position="213"/>
        <end position="233"/>
    </location>
</feature>
<feature type="transmembrane region" description="Helical" evidence="1">
    <location>
        <begin position="234"/>
        <end position="254"/>
    </location>
</feature>
<gene>
    <name evidence="1" type="primary">tatC</name>
    <name type="ordered locus">Acid345_2680</name>
</gene>
<dbReference type="EMBL" id="CP000360">
    <property type="protein sequence ID" value="ABF41681.1"/>
    <property type="molecule type" value="Genomic_DNA"/>
</dbReference>
<dbReference type="RefSeq" id="WP_011523482.1">
    <property type="nucleotide sequence ID" value="NC_008009.1"/>
</dbReference>
<dbReference type="SMR" id="Q1IN69"/>
<dbReference type="STRING" id="204669.Acid345_2680"/>
<dbReference type="EnsemblBacteria" id="ABF41681">
    <property type="protein sequence ID" value="ABF41681"/>
    <property type="gene ID" value="Acid345_2680"/>
</dbReference>
<dbReference type="KEGG" id="aba:Acid345_2680"/>
<dbReference type="eggNOG" id="COG0805">
    <property type="taxonomic scope" value="Bacteria"/>
</dbReference>
<dbReference type="HOGENOM" id="CLU_031942_3_3_0"/>
<dbReference type="OrthoDB" id="9777044at2"/>
<dbReference type="Proteomes" id="UP000002432">
    <property type="component" value="Chromosome"/>
</dbReference>
<dbReference type="GO" id="GO:0033281">
    <property type="term" value="C:TAT protein transport complex"/>
    <property type="evidence" value="ECO:0007669"/>
    <property type="project" value="UniProtKB-UniRule"/>
</dbReference>
<dbReference type="GO" id="GO:0009977">
    <property type="term" value="F:proton motive force dependent protein transmembrane transporter activity"/>
    <property type="evidence" value="ECO:0007669"/>
    <property type="project" value="TreeGrafter"/>
</dbReference>
<dbReference type="GO" id="GO:0065002">
    <property type="term" value="P:intracellular protein transmembrane transport"/>
    <property type="evidence" value="ECO:0007669"/>
    <property type="project" value="TreeGrafter"/>
</dbReference>
<dbReference type="GO" id="GO:0043953">
    <property type="term" value="P:protein transport by the Tat complex"/>
    <property type="evidence" value="ECO:0007669"/>
    <property type="project" value="UniProtKB-UniRule"/>
</dbReference>
<dbReference type="HAMAP" id="MF_00902">
    <property type="entry name" value="TatC"/>
    <property type="match status" value="1"/>
</dbReference>
<dbReference type="InterPro" id="IPR019820">
    <property type="entry name" value="Sec-indep_translocase_CS"/>
</dbReference>
<dbReference type="InterPro" id="IPR002033">
    <property type="entry name" value="TatC"/>
</dbReference>
<dbReference type="NCBIfam" id="TIGR00945">
    <property type="entry name" value="tatC"/>
    <property type="match status" value="1"/>
</dbReference>
<dbReference type="PANTHER" id="PTHR30371">
    <property type="entry name" value="SEC-INDEPENDENT PROTEIN TRANSLOCASE PROTEIN TATC"/>
    <property type="match status" value="1"/>
</dbReference>
<dbReference type="PANTHER" id="PTHR30371:SF0">
    <property type="entry name" value="SEC-INDEPENDENT PROTEIN TRANSLOCASE PROTEIN TATC, CHLOROPLASTIC-RELATED"/>
    <property type="match status" value="1"/>
</dbReference>
<dbReference type="Pfam" id="PF00902">
    <property type="entry name" value="TatC"/>
    <property type="match status" value="1"/>
</dbReference>
<dbReference type="PRINTS" id="PR01840">
    <property type="entry name" value="TATCFAMILY"/>
</dbReference>
<dbReference type="PROSITE" id="PS01218">
    <property type="entry name" value="TATC"/>
    <property type="match status" value="1"/>
</dbReference>
<accession>Q1IN69</accession>
<sequence>MPSPTIDPAIRARLSQEALKGMSFLEHLEELRRRIIWTFVYIAAGFGVCWWWHEQIYDFMQRPIMKALAANHLDQKLVYLNPTEPFNMYLKMAFIAGLFVASPFVLYQVWLFIAPGLYKRERRYVLPFMFSTVLLFLGGGVFGYYMVYPNALTFLIGYSHQFSPMITISEYTDLFLTIILGLGIVFEMPILVFFLALMGIVSAGWMWRNLRYSILVIFVIAAIITPTTDIMNMCVFAAPMILLYILSIGVAFLVHPKNRRKRREAQEAQEG</sequence>
<comment type="function">
    <text evidence="1">Part of the twin-arginine translocation (Tat) system that transports large folded proteins containing a characteristic twin-arginine motif in their signal peptide across membranes.</text>
</comment>
<comment type="subunit">
    <text evidence="1">Forms a complex with TatA.</text>
</comment>
<comment type="subcellular location">
    <subcellularLocation>
        <location evidence="1">Cell inner membrane</location>
        <topology evidence="1">Multi-pass membrane protein</topology>
    </subcellularLocation>
</comment>
<comment type="similarity">
    <text evidence="1">Belongs to the TatC family.</text>
</comment>
<organism>
    <name type="scientific">Koribacter versatilis (strain Ellin345)</name>
    <dbReference type="NCBI Taxonomy" id="204669"/>
    <lineage>
        <taxon>Bacteria</taxon>
        <taxon>Pseudomonadati</taxon>
        <taxon>Acidobacteriota</taxon>
        <taxon>Terriglobia</taxon>
        <taxon>Terriglobales</taxon>
        <taxon>Candidatus Korobacteraceae</taxon>
        <taxon>Candidatus Korobacter</taxon>
    </lineage>
</organism>
<proteinExistence type="inferred from homology"/>
<name>TATC_KORVE</name>